<sequence length="207" mass="22985">MANHQIKAQRRKDEGKGASRRLRHAGMIPAIIYGGEQRPVSIQLNHEQIWLAQQNEWFYSSILDLNVDGAGAEKVLLRDLQRHPYRQLVMHVDFQRVSSDAKLSVAVPLHFINQATSPAGKVGGVVITHELNEVQVSCLPKDLPEFIEVDLSTLNVGHVIHLSDITFPIGVELSTRLDKEHDMAVVIAKHAVIEDDAPAEEGEGDSK</sequence>
<gene>
    <name evidence="1" type="primary">rplY</name>
    <name evidence="1" type="synonym">ctc</name>
    <name type="ordered locus">XfasM23_2117</name>
</gene>
<name>RL25_XYLF2</name>
<proteinExistence type="inferred from homology"/>
<evidence type="ECO:0000255" key="1">
    <source>
        <dbReference type="HAMAP-Rule" id="MF_01334"/>
    </source>
</evidence>
<evidence type="ECO:0000256" key="2">
    <source>
        <dbReference type="SAM" id="MobiDB-lite"/>
    </source>
</evidence>
<evidence type="ECO:0000305" key="3"/>
<feature type="chain" id="PRO_1000142565" description="Large ribosomal subunit protein bL25">
    <location>
        <begin position="1"/>
        <end position="207"/>
    </location>
</feature>
<feature type="region of interest" description="Disordered" evidence="2">
    <location>
        <begin position="1"/>
        <end position="20"/>
    </location>
</feature>
<accession>B2IA79</accession>
<keyword id="KW-0687">Ribonucleoprotein</keyword>
<keyword id="KW-0689">Ribosomal protein</keyword>
<keyword id="KW-0694">RNA-binding</keyword>
<keyword id="KW-0699">rRNA-binding</keyword>
<protein>
    <recommendedName>
        <fullName evidence="1">Large ribosomal subunit protein bL25</fullName>
    </recommendedName>
    <alternativeName>
        <fullName evidence="3">50S ribosomal protein L25</fullName>
    </alternativeName>
    <alternativeName>
        <fullName evidence="1">General stress protein CTC</fullName>
    </alternativeName>
</protein>
<dbReference type="EMBL" id="CP001011">
    <property type="protein sequence ID" value="ACB93515.1"/>
    <property type="molecule type" value="Genomic_DNA"/>
</dbReference>
<dbReference type="RefSeq" id="WP_004087395.1">
    <property type="nucleotide sequence ID" value="NC_010577.1"/>
</dbReference>
<dbReference type="SMR" id="B2IA79"/>
<dbReference type="KEGG" id="xfn:XfasM23_2117"/>
<dbReference type="HOGENOM" id="CLU_075939_0_1_6"/>
<dbReference type="Proteomes" id="UP000001698">
    <property type="component" value="Chromosome"/>
</dbReference>
<dbReference type="GO" id="GO:0022625">
    <property type="term" value="C:cytosolic large ribosomal subunit"/>
    <property type="evidence" value="ECO:0007669"/>
    <property type="project" value="TreeGrafter"/>
</dbReference>
<dbReference type="GO" id="GO:0008097">
    <property type="term" value="F:5S rRNA binding"/>
    <property type="evidence" value="ECO:0007669"/>
    <property type="project" value="InterPro"/>
</dbReference>
<dbReference type="GO" id="GO:0003735">
    <property type="term" value="F:structural constituent of ribosome"/>
    <property type="evidence" value="ECO:0007669"/>
    <property type="project" value="InterPro"/>
</dbReference>
<dbReference type="GO" id="GO:0006412">
    <property type="term" value="P:translation"/>
    <property type="evidence" value="ECO:0007669"/>
    <property type="project" value="UniProtKB-UniRule"/>
</dbReference>
<dbReference type="CDD" id="cd00495">
    <property type="entry name" value="Ribosomal_L25_TL5_CTC"/>
    <property type="match status" value="1"/>
</dbReference>
<dbReference type="FunFam" id="2.40.240.10:FF:000002">
    <property type="entry name" value="50S ribosomal protein L25"/>
    <property type="match status" value="1"/>
</dbReference>
<dbReference type="Gene3D" id="2.170.120.20">
    <property type="entry name" value="Ribosomal protein L25, beta domain"/>
    <property type="match status" value="1"/>
</dbReference>
<dbReference type="Gene3D" id="2.40.240.10">
    <property type="entry name" value="Ribosomal Protein L25, Chain P"/>
    <property type="match status" value="1"/>
</dbReference>
<dbReference type="HAMAP" id="MF_01336">
    <property type="entry name" value="Ribosomal_bL25"/>
    <property type="match status" value="1"/>
</dbReference>
<dbReference type="HAMAP" id="MF_01334">
    <property type="entry name" value="Ribosomal_bL25_CTC"/>
    <property type="match status" value="1"/>
</dbReference>
<dbReference type="InterPro" id="IPR020056">
    <property type="entry name" value="Rbsml_bL25/Gln-tRNA_synth_N"/>
</dbReference>
<dbReference type="InterPro" id="IPR011035">
    <property type="entry name" value="Ribosomal_bL25/Gln-tRNA_synth"/>
</dbReference>
<dbReference type="InterPro" id="IPR020057">
    <property type="entry name" value="Ribosomal_bL25_b-dom"/>
</dbReference>
<dbReference type="InterPro" id="IPR037121">
    <property type="entry name" value="Ribosomal_bL25_C"/>
</dbReference>
<dbReference type="InterPro" id="IPR001021">
    <property type="entry name" value="Ribosomal_bL25_long"/>
</dbReference>
<dbReference type="InterPro" id="IPR020055">
    <property type="entry name" value="Ribosomal_bL25_short"/>
</dbReference>
<dbReference type="InterPro" id="IPR029751">
    <property type="entry name" value="Ribosomal_L25_dom"/>
</dbReference>
<dbReference type="InterPro" id="IPR020930">
    <property type="entry name" value="Ribosomal_uL5_bac-type"/>
</dbReference>
<dbReference type="NCBIfam" id="TIGR00731">
    <property type="entry name" value="bL25_bact_ctc"/>
    <property type="match status" value="1"/>
</dbReference>
<dbReference type="NCBIfam" id="NF004128">
    <property type="entry name" value="PRK05618.1-2"/>
    <property type="match status" value="1"/>
</dbReference>
<dbReference type="NCBIfam" id="NF004130">
    <property type="entry name" value="PRK05618.1-5"/>
    <property type="match status" value="1"/>
</dbReference>
<dbReference type="NCBIfam" id="NF004612">
    <property type="entry name" value="PRK05943.1"/>
    <property type="match status" value="1"/>
</dbReference>
<dbReference type="PANTHER" id="PTHR33284">
    <property type="entry name" value="RIBOSOMAL PROTEIN L25/GLN-TRNA SYNTHETASE, ANTI-CODON-BINDING DOMAIN-CONTAINING PROTEIN"/>
    <property type="match status" value="1"/>
</dbReference>
<dbReference type="PANTHER" id="PTHR33284:SF1">
    <property type="entry name" value="RIBOSOMAL PROTEIN L25_GLN-TRNA SYNTHETASE, ANTI-CODON-BINDING DOMAIN-CONTAINING PROTEIN"/>
    <property type="match status" value="1"/>
</dbReference>
<dbReference type="Pfam" id="PF01386">
    <property type="entry name" value="Ribosomal_L25p"/>
    <property type="match status" value="1"/>
</dbReference>
<dbReference type="Pfam" id="PF14693">
    <property type="entry name" value="Ribosomal_TL5_C"/>
    <property type="match status" value="1"/>
</dbReference>
<dbReference type="SUPFAM" id="SSF50715">
    <property type="entry name" value="Ribosomal protein L25-like"/>
    <property type="match status" value="1"/>
</dbReference>
<comment type="function">
    <text evidence="1">This is one of the proteins that binds to the 5S RNA in the ribosome where it forms part of the central protuberance.</text>
</comment>
<comment type="subunit">
    <text evidence="1">Part of the 50S ribosomal subunit; part of the 5S rRNA/L5/L18/L25 subcomplex. Contacts the 5S rRNA. Binds to the 5S rRNA independently of L5 and L18.</text>
</comment>
<comment type="similarity">
    <text evidence="1">Belongs to the bacterial ribosomal protein bL25 family. CTC subfamily.</text>
</comment>
<reference key="1">
    <citation type="journal article" date="2010" name="J. Bacteriol.">
        <title>Whole genome sequences of two Xylella fastidiosa strains (M12 and M23) causing almond leaf scorch disease in California.</title>
        <authorList>
            <person name="Chen J."/>
            <person name="Xie G."/>
            <person name="Han S."/>
            <person name="Chertkov O."/>
            <person name="Sims D."/>
            <person name="Civerolo E.L."/>
        </authorList>
    </citation>
    <scope>NUCLEOTIDE SEQUENCE [LARGE SCALE GENOMIC DNA]</scope>
    <source>
        <strain>M23</strain>
    </source>
</reference>
<organism>
    <name type="scientific">Xylella fastidiosa (strain M23)</name>
    <dbReference type="NCBI Taxonomy" id="405441"/>
    <lineage>
        <taxon>Bacteria</taxon>
        <taxon>Pseudomonadati</taxon>
        <taxon>Pseudomonadota</taxon>
        <taxon>Gammaproteobacteria</taxon>
        <taxon>Lysobacterales</taxon>
        <taxon>Lysobacteraceae</taxon>
        <taxon>Xylella</taxon>
    </lineage>
</organism>